<evidence type="ECO:0000255" key="1">
    <source>
        <dbReference type="HAMAP-Rule" id="MF_01322"/>
    </source>
</evidence>
<reference key="1">
    <citation type="submission" date="2006-02" db="EMBL/GenBank/DDBJ databases">
        <title>Complete sequence of chromosome of Jannaschia sp. CCS1.</title>
        <authorList>
            <consortium name="US DOE Joint Genome Institute"/>
            <person name="Copeland A."/>
            <person name="Lucas S."/>
            <person name="Lapidus A."/>
            <person name="Barry K."/>
            <person name="Detter J.C."/>
            <person name="Glavina del Rio T."/>
            <person name="Hammon N."/>
            <person name="Israni S."/>
            <person name="Pitluck S."/>
            <person name="Brettin T."/>
            <person name="Bruce D."/>
            <person name="Han C."/>
            <person name="Tapia R."/>
            <person name="Gilna P."/>
            <person name="Chertkov O."/>
            <person name="Saunders E."/>
            <person name="Schmutz J."/>
            <person name="Larimer F."/>
            <person name="Land M."/>
            <person name="Kyrpides N."/>
            <person name="Lykidis A."/>
            <person name="Moran M.A."/>
            <person name="Belas R."/>
            <person name="Ye W."/>
            <person name="Buchan A."/>
            <person name="Gonzalez J.M."/>
            <person name="Schell M.A."/>
            <person name="Richardson P."/>
        </authorList>
    </citation>
    <scope>NUCLEOTIDE SEQUENCE [LARGE SCALE GENOMIC DNA]</scope>
    <source>
        <strain>CCS1</strain>
    </source>
</reference>
<proteinExistence type="inferred from homology"/>
<feature type="chain" id="PRO_0000240806" description="DNA-directed RNA polymerase subunit beta'">
    <location>
        <begin position="1"/>
        <end position="1404"/>
    </location>
</feature>
<feature type="binding site" evidence="1">
    <location>
        <position position="72"/>
    </location>
    <ligand>
        <name>Zn(2+)</name>
        <dbReference type="ChEBI" id="CHEBI:29105"/>
        <label>1</label>
    </ligand>
</feature>
<feature type="binding site" evidence="1">
    <location>
        <position position="74"/>
    </location>
    <ligand>
        <name>Zn(2+)</name>
        <dbReference type="ChEBI" id="CHEBI:29105"/>
        <label>1</label>
    </ligand>
</feature>
<feature type="binding site" evidence="1">
    <location>
        <position position="87"/>
    </location>
    <ligand>
        <name>Zn(2+)</name>
        <dbReference type="ChEBI" id="CHEBI:29105"/>
        <label>1</label>
    </ligand>
</feature>
<feature type="binding site" evidence="1">
    <location>
        <position position="90"/>
    </location>
    <ligand>
        <name>Zn(2+)</name>
        <dbReference type="ChEBI" id="CHEBI:29105"/>
        <label>1</label>
    </ligand>
</feature>
<feature type="binding site" evidence="1">
    <location>
        <position position="463"/>
    </location>
    <ligand>
        <name>Mg(2+)</name>
        <dbReference type="ChEBI" id="CHEBI:18420"/>
    </ligand>
</feature>
<feature type="binding site" evidence="1">
    <location>
        <position position="465"/>
    </location>
    <ligand>
        <name>Mg(2+)</name>
        <dbReference type="ChEBI" id="CHEBI:18420"/>
    </ligand>
</feature>
<feature type="binding site" evidence="1">
    <location>
        <position position="467"/>
    </location>
    <ligand>
        <name>Mg(2+)</name>
        <dbReference type="ChEBI" id="CHEBI:18420"/>
    </ligand>
</feature>
<feature type="binding site" evidence="1">
    <location>
        <position position="811"/>
    </location>
    <ligand>
        <name>Zn(2+)</name>
        <dbReference type="ChEBI" id="CHEBI:29105"/>
        <label>2</label>
    </ligand>
</feature>
<feature type="binding site" evidence="1">
    <location>
        <position position="885"/>
    </location>
    <ligand>
        <name>Zn(2+)</name>
        <dbReference type="ChEBI" id="CHEBI:29105"/>
        <label>2</label>
    </ligand>
</feature>
<feature type="binding site" evidence="1">
    <location>
        <position position="892"/>
    </location>
    <ligand>
        <name>Zn(2+)</name>
        <dbReference type="ChEBI" id="CHEBI:29105"/>
        <label>2</label>
    </ligand>
</feature>
<feature type="binding site" evidence="1">
    <location>
        <position position="895"/>
    </location>
    <ligand>
        <name>Zn(2+)</name>
        <dbReference type="ChEBI" id="CHEBI:29105"/>
        <label>2</label>
    </ligand>
</feature>
<sequence>MNQELTNNPFNPLTPPKAFDEIKVSLASPERILSWSYGEIKKPETINYRTFKPERDGLFCARIFGPIKDYECLCGKYKRMKYRGVVCEKCGVEVTLQKVRRERMGHIELAAPVAHIWFLKSLPSRIGLMLDMTLRDLERILYFENYVVIEPGLTDLTYGQLMGEEEFMDAQDAYGADAFQANIGAEAIREMLSQIDLESEANQLREDLKEATGELKPKKIIKRLKIVESFLESGNRPEWMVMTVVPVIPPELRPLVPLDGGRFATSDLNDLYRRVINRNNRLKRLIELRAPDIIIRNEKRMLQESVDALFDNGRRGRVITGANKRPLKSLSDMLKGKQGRFRQNLLGKRVDFSGRSVIVTGPELKLHQCGLPKKMALELFKPFIYSRLEAKGLSSTVKQAKKLVEKERPEVWDILDEVIREHPVLLNRAPTLHRLGIQAFEPVLIEGKAIQLHPLVCSAFNADFDGDQMAVHVPLSLEAQLEARVLMMSTNNVLSPANGAPIIVPSQDMILGLYYVTLAREGMKGEGMIFADVDEVRHALDAGEIHLHSKITARLPQIDEEGNEIMVRFDTTPGRVMLGALLPLNAKAPFDLVNRLLRKKEVQQVIDTVYRYCGQKESVIFCDQIMSMGFKEAFKAGISFGKDDMVIPDTKWTLVEDARDQVEEFEQQYMDGLITQGEKYNKVIDAWSKVNDKVTDAMMGTISASKRDENDAEMEPNSVYMMAHSGARGSVTQMKQLGGMRGLMAKPNGEIIETPIISNFKEGLTVLEYFNSTHGARKGLSDTALKTANSGYLTRRLVDVAQDCIVRMDDCGTENTIKAEAAVNDGEVVASLAERILGRTAGEDVFIPGTDEIIVAKGELIDERKADAVEAAGVTTMQMRSPLTCEAEEGVCATCYGRDLARGTKVNTGEAVGIIAAQSIGEPGTQLTMRTFHIGGVAQGGQQSFQEVNVDGKVEFRNANLLKNANGESVVMGRNMVLAIMDDQGSERASFKLGYGTNVLVEDGKKVVRGDRLFEWDPYTLPIIAEAAGTAKFVDLVSGISIRDETDDATGMTQKIVSDWRTAPKGNELKPEIIIAGEDGEPMRNDQGNPVTYTMSVDAILSIEEGQTVKAGDVIARIPREGAKTKDITGGLPRVAELFEARRPKDHAIIAEIDGYVKFGRDFKNKRRIGIVPADESLEPVEYMVPKGKHIPVAEGDFVQVGDYIMDGNPAPHDILAVLGVEALADYMIDEVQDVYRLQGVKINDKHIEVIVRQMLQKWEIQDSGETTLLKGEHVDKAEFDSANAKAVRDGRRPAQGEPILLGITKASLQTRSFISAASFQETTRVLTEASVQGKKDRLVGLKENVIVGRLIPAGTGGATQDVERIAKGRDQVVIDAAQAEAEAAAALAAPVMEDAAPDTDAAE</sequence>
<protein>
    <recommendedName>
        <fullName evidence="1">DNA-directed RNA polymerase subunit beta'</fullName>
        <shortName evidence="1">RNAP subunit beta'</shortName>
        <ecNumber evidence="1">2.7.7.6</ecNumber>
    </recommendedName>
    <alternativeName>
        <fullName evidence="1">RNA polymerase subunit beta'</fullName>
    </alternativeName>
    <alternativeName>
        <fullName evidence="1">Transcriptase subunit beta'</fullName>
    </alternativeName>
</protein>
<name>RPOC_JANSC</name>
<keyword id="KW-0240">DNA-directed RNA polymerase</keyword>
<keyword id="KW-0460">Magnesium</keyword>
<keyword id="KW-0479">Metal-binding</keyword>
<keyword id="KW-0548">Nucleotidyltransferase</keyword>
<keyword id="KW-1185">Reference proteome</keyword>
<keyword id="KW-0804">Transcription</keyword>
<keyword id="KW-0808">Transferase</keyword>
<keyword id="KW-0862">Zinc</keyword>
<organism>
    <name type="scientific">Jannaschia sp. (strain CCS1)</name>
    <dbReference type="NCBI Taxonomy" id="290400"/>
    <lineage>
        <taxon>Bacteria</taxon>
        <taxon>Pseudomonadati</taxon>
        <taxon>Pseudomonadota</taxon>
        <taxon>Alphaproteobacteria</taxon>
        <taxon>Rhodobacterales</taxon>
        <taxon>Roseobacteraceae</taxon>
        <taxon>Jannaschia</taxon>
    </lineage>
</organism>
<dbReference type="EC" id="2.7.7.6" evidence="1"/>
<dbReference type="EMBL" id="CP000264">
    <property type="protein sequence ID" value="ABD53486.1"/>
    <property type="molecule type" value="Genomic_DNA"/>
</dbReference>
<dbReference type="RefSeq" id="WP_011453695.1">
    <property type="nucleotide sequence ID" value="NC_007802.1"/>
</dbReference>
<dbReference type="SMR" id="Q28UX6"/>
<dbReference type="STRING" id="290400.Jann_0569"/>
<dbReference type="KEGG" id="jan:Jann_0569"/>
<dbReference type="eggNOG" id="COG0086">
    <property type="taxonomic scope" value="Bacteria"/>
</dbReference>
<dbReference type="HOGENOM" id="CLU_000524_3_1_5"/>
<dbReference type="OrthoDB" id="9815296at2"/>
<dbReference type="Proteomes" id="UP000008326">
    <property type="component" value="Chromosome"/>
</dbReference>
<dbReference type="GO" id="GO:0000428">
    <property type="term" value="C:DNA-directed RNA polymerase complex"/>
    <property type="evidence" value="ECO:0007669"/>
    <property type="project" value="UniProtKB-KW"/>
</dbReference>
<dbReference type="GO" id="GO:0003677">
    <property type="term" value="F:DNA binding"/>
    <property type="evidence" value="ECO:0007669"/>
    <property type="project" value="UniProtKB-UniRule"/>
</dbReference>
<dbReference type="GO" id="GO:0003899">
    <property type="term" value="F:DNA-directed RNA polymerase activity"/>
    <property type="evidence" value="ECO:0007669"/>
    <property type="project" value="UniProtKB-UniRule"/>
</dbReference>
<dbReference type="GO" id="GO:0000287">
    <property type="term" value="F:magnesium ion binding"/>
    <property type="evidence" value="ECO:0007669"/>
    <property type="project" value="UniProtKB-UniRule"/>
</dbReference>
<dbReference type="GO" id="GO:0008270">
    <property type="term" value="F:zinc ion binding"/>
    <property type="evidence" value="ECO:0007669"/>
    <property type="project" value="UniProtKB-UniRule"/>
</dbReference>
<dbReference type="GO" id="GO:0006351">
    <property type="term" value="P:DNA-templated transcription"/>
    <property type="evidence" value="ECO:0007669"/>
    <property type="project" value="UniProtKB-UniRule"/>
</dbReference>
<dbReference type="CDD" id="cd02655">
    <property type="entry name" value="RNAP_beta'_C"/>
    <property type="match status" value="1"/>
</dbReference>
<dbReference type="CDD" id="cd01609">
    <property type="entry name" value="RNAP_beta'_N"/>
    <property type="match status" value="1"/>
</dbReference>
<dbReference type="Gene3D" id="1.10.132.30">
    <property type="match status" value="1"/>
</dbReference>
<dbReference type="Gene3D" id="1.10.150.390">
    <property type="match status" value="1"/>
</dbReference>
<dbReference type="Gene3D" id="1.10.1790.20">
    <property type="match status" value="1"/>
</dbReference>
<dbReference type="Gene3D" id="1.10.40.90">
    <property type="match status" value="1"/>
</dbReference>
<dbReference type="Gene3D" id="2.40.40.20">
    <property type="match status" value="1"/>
</dbReference>
<dbReference type="Gene3D" id="2.40.50.100">
    <property type="match status" value="3"/>
</dbReference>
<dbReference type="Gene3D" id="4.10.860.120">
    <property type="entry name" value="RNA polymerase II, clamp domain"/>
    <property type="match status" value="1"/>
</dbReference>
<dbReference type="Gene3D" id="1.10.274.100">
    <property type="entry name" value="RNA polymerase Rpb1, domain 3"/>
    <property type="match status" value="2"/>
</dbReference>
<dbReference type="HAMAP" id="MF_01322">
    <property type="entry name" value="RNApol_bact_RpoC"/>
    <property type="match status" value="1"/>
</dbReference>
<dbReference type="InterPro" id="IPR045867">
    <property type="entry name" value="DNA-dir_RpoC_beta_prime"/>
</dbReference>
<dbReference type="InterPro" id="IPR012754">
    <property type="entry name" value="DNA-dir_RpoC_beta_prime_bact"/>
</dbReference>
<dbReference type="InterPro" id="IPR000722">
    <property type="entry name" value="RNA_pol_asu"/>
</dbReference>
<dbReference type="InterPro" id="IPR006592">
    <property type="entry name" value="RNA_pol_N"/>
</dbReference>
<dbReference type="InterPro" id="IPR007080">
    <property type="entry name" value="RNA_pol_Rpb1_1"/>
</dbReference>
<dbReference type="InterPro" id="IPR007066">
    <property type="entry name" value="RNA_pol_Rpb1_3"/>
</dbReference>
<dbReference type="InterPro" id="IPR042102">
    <property type="entry name" value="RNA_pol_Rpb1_3_sf"/>
</dbReference>
<dbReference type="InterPro" id="IPR007083">
    <property type="entry name" value="RNA_pol_Rpb1_4"/>
</dbReference>
<dbReference type="InterPro" id="IPR007081">
    <property type="entry name" value="RNA_pol_Rpb1_5"/>
</dbReference>
<dbReference type="InterPro" id="IPR044893">
    <property type="entry name" value="RNA_pol_Rpb1_clamp_domain"/>
</dbReference>
<dbReference type="InterPro" id="IPR038120">
    <property type="entry name" value="Rpb1_funnel_sf"/>
</dbReference>
<dbReference type="NCBIfam" id="TIGR02386">
    <property type="entry name" value="rpoC_TIGR"/>
    <property type="match status" value="1"/>
</dbReference>
<dbReference type="PANTHER" id="PTHR19376">
    <property type="entry name" value="DNA-DIRECTED RNA POLYMERASE"/>
    <property type="match status" value="1"/>
</dbReference>
<dbReference type="PANTHER" id="PTHR19376:SF54">
    <property type="entry name" value="DNA-DIRECTED RNA POLYMERASE SUBUNIT BETA"/>
    <property type="match status" value="1"/>
</dbReference>
<dbReference type="Pfam" id="PF04997">
    <property type="entry name" value="RNA_pol_Rpb1_1"/>
    <property type="match status" value="1"/>
</dbReference>
<dbReference type="Pfam" id="PF00623">
    <property type="entry name" value="RNA_pol_Rpb1_2"/>
    <property type="match status" value="2"/>
</dbReference>
<dbReference type="Pfam" id="PF04983">
    <property type="entry name" value="RNA_pol_Rpb1_3"/>
    <property type="match status" value="1"/>
</dbReference>
<dbReference type="Pfam" id="PF05000">
    <property type="entry name" value="RNA_pol_Rpb1_4"/>
    <property type="match status" value="1"/>
</dbReference>
<dbReference type="Pfam" id="PF04998">
    <property type="entry name" value="RNA_pol_Rpb1_5"/>
    <property type="match status" value="1"/>
</dbReference>
<dbReference type="SMART" id="SM00663">
    <property type="entry name" value="RPOLA_N"/>
    <property type="match status" value="1"/>
</dbReference>
<dbReference type="SUPFAM" id="SSF64484">
    <property type="entry name" value="beta and beta-prime subunits of DNA dependent RNA-polymerase"/>
    <property type="match status" value="1"/>
</dbReference>
<comment type="function">
    <text evidence="1">DNA-dependent RNA polymerase catalyzes the transcription of DNA into RNA using the four ribonucleoside triphosphates as substrates.</text>
</comment>
<comment type="catalytic activity">
    <reaction evidence="1">
        <text>RNA(n) + a ribonucleoside 5'-triphosphate = RNA(n+1) + diphosphate</text>
        <dbReference type="Rhea" id="RHEA:21248"/>
        <dbReference type="Rhea" id="RHEA-COMP:14527"/>
        <dbReference type="Rhea" id="RHEA-COMP:17342"/>
        <dbReference type="ChEBI" id="CHEBI:33019"/>
        <dbReference type="ChEBI" id="CHEBI:61557"/>
        <dbReference type="ChEBI" id="CHEBI:140395"/>
        <dbReference type="EC" id="2.7.7.6"/>
    </reaction>
</comment>
<comment type="cofactor">
    <cofactor evidence="1">
        <name>Mg(2+)</name>
        <dbReference type="ChEBI" id="CHEBI:18420"/>
    </cofactor>
    <text evidence="1">Binds 1 Mg(2+) ion per subunit.</text>
</comment>
<comment type="cofactor">
    <cofactor evidence="1">
        <name>Zn(2+)</name>
        <dbReference type="ChEBI" id="CHEBI:29105"/>
    </cofactor>
    <text evidence="1">Binds 2 Zn(2+) ions per subunit.</text>
</comment>
<comment type="subunit">
    <text evidence="1">The RNAP catalytic core consists of 2 alpha, 1 beta, 1 beta' and 1 omega subunit. When a sigma factor is associated with the core the holoenzyme is formed, which can initiate transcription.</text>
</comment>
<comment type="similarity">
    <text evidence="1">Belongs to the RNA polymerase beta' chain family.</text>
</comment>
<accession>Q28UX6</accession>
<gene>
    <name evidence="1" type="primary">rpoC</name>
    <name type="ordered locus">Jann_0569</name>
</gene>